<keyword id="KW-0574">Periplasm</keyword>
<keyword id="KW-0732">Signal</keyword>
<feature type="signal peptide" evidence="1">
    <location>
        <begin position="1"/>
        <end position="33"/>
    </location>
</feature>
<feature type="chain" id="PRO_5000486486" description="Glucans biosynthesis protein G">
    <location>
        <begin position="34"/>
        <end position="522"/>
    </location>
</feature>
<reference key="1">
    <citation type="submission" date="2009-07" db="EMBL/GenBank/DDBJ databases">
        <title>Complete sequence of Pectobacterium carotovorum subsp. carotovorum PC1.</title>
        <authorList>
            <consortium name="US DOE Joint Genome Institute"/>
            <person name="Lucas S."/>
            <person name="Copeland A."/>
            <person name="Lapidus A."/>
            <person name="Glavina del Rio T."/>
            <person name="Tice H."/>
            <person name="Bruce D."/>
            <person name="Goodwin L."/>
            <person name="Pitluck S."/>
            <person name="Munk A.C."/>
            <person name="Brettin T."/>
            <person name="Detter J.C."/>
            <person name="Han C."/>
            <person name="Tapia R."/>
            <person name="Larimer F."/>
            <person name="Land M."/>
            <person name="Hauser L."/>
            <person name="Kyrpides N."/>
            <person name="Mikhailova N."/>
            <person name="Balakrishnan V."/>
            <person name="Glasner J."/>
            <person name="Perna N.T."/>
        </authorList>
    </citation>
    <scope>NUCLEOTIDE SEQUENCE [LARGE SCALE GENOMIC DNA]</scope>
    <source>
        <strain>PC1</strain>
    </source>
</reference>
<dbReference type="EMBL" id="CP001657">
    <property type="protein sequence ID" value="ACT13554.1"/>
    <property type="molecule type" value="Genomic_DNA"/>
</dbReference>
<dbReference type="SMR" id="C6DKV3"/>
<dbReference type="KEGG" id="pct:PC1_2523"/>
<dbReference type="eggNOG" id="COG3131">
    <property type="taxonomic scope" value="Bacteria"/>
</dbReference>
<dbReference type="HOGENOM" id="CLU_023403_2_0_6"/>
<dbReference type="UniPathway" id="UPA00637"/>
<dbReference type="Proteomes" id="UP000002736">
    <property type="component" value="Chromosome"/>
</dbReference>
<dbReference type="GO" id="GO:0030288">
    <property type="term" value="C:outer membrane-bounded periplasmic space"/>
    <property type="evidence" value="ECO:0007669"/>
    <property type="project" value="TreeGrafter"/>
</dbReference>
<dbReference type="GO" id="GO:0030246">
    <property type="term" value="F:carbohydrate binding"/>
    <property type="evidence" value="ECO:0007669"/>
    <property type="project" value="InterPro"/>
</dbReference>
<dbReference type="GO" id="GO:0003824">
    <property type="term" value="F:catalytic activity"/>
    <property type="evidence" value="ECO:0007669"/>
    <property type="project" value="InterPro"/>
</dbReference>
<dbReference type="GO" id="GO:0051274">
    <property type="term" value="P:beta-glucan biosynthetic process"/>
    <property type="evidence" value="ECO:0007669"/>
    <property type="project" value="TreeGrafter"/>
</dbReference>
<dbReference type="FunFam" id="2.70.98.10:FF:000001">
    <property type="entry name" value="Glucans biosynthesis protein G"/>
    <property type="match status" value="1"/>
</dbReference>
<dbReference type="Gene3D" id="2.70.98.10">
    <property type="match status" value="1"/>
</dbReference>
<dbReference type="Gene3D" id="2.60.40.10">
    <property type="entry name" value="Immunoglobulins"/>
    <property type="match status" value="1"/>
</dbReference>
<dbReference type="HAMAP" id="MF_01069">
    <property type="entry name" value="MdoG_OpgG"/>
    <property type="match status" value="1"/>
</dbReference>
<dbReference type="InterPro" id="IPR011013">
    <property type="entry name" value="Gal_mutarotase_sf_dom"/>
</dbReference>
<dbReference type="InterPro" id="IPR014718">
    <property type="entry name" value="GH-type_carb-bd"/>
</dbReference>
<dbReference type="InterPro" id="IPR014438">
    <property type="entry name" value="Glucan_biosyn_MdoG/MdoD"/>
</dbReference>
<dbReference type="InterPro" id="IPR007444">
    <property type="entry name" value="Glucan_biosyn_MdoG_C"/>
</dbReference>
<dbReference type="InterPro" id="IPR013783">
    <property type="entry name" value="Ig-like_fold"/>
</dbReference>
<dbReference type="InterPro" id="IPR014756">
    <property type="entry name" value="Ig_E-set"/>
</dbReference>
<dbReference type="InterPro" id="IPR023704">
    <property type="entry name" value="MdoG_OpgG"/>
</dbReference>
<dbReference type="PANTHER" id="PTHR30504">
    <property type="entry name" value="GLUCANS BIOSYNTHESIS PROTEIN"/>
    <property type="match status" value="1"/>
</dbReference>
<dbReference type="PANTHER" id="PTHR30504:SF4">
    <property type="entry name" value="GLUCANS BIOSYNTHESIS PROTEIN G"/>
    <property type="match status" value="1"/>
</dbReference>
<dbReference type="Pfam" id="PF04349">
    <property type="entry name" value="MdoG"/>
    <property type="match status" value="1"/>
</dbReference>
<dbReference type="PIRSF" id="PIRSF006281">
    <property type="entry name" value="MdoG"/>
    <property type="match status" value="1"/>
</dbReference>
<dbReference type="SUPFAM" id="SSF81296">
    <property type="entry name" value="E set domains"/>
    <property type="match status" value="1"/>
</dbReference>
<dbReference type="SUPFAM" id="SSF74650">
    <property type="entry name" value="Galactose mutarotase-like"/>
    <property type="match status" value="1"/>
</dbReference>
<protein>
    <recommendedName>
        <fullName evidence="1">Glucans biosynthesis protein G</fullName>
    </recommendedName>
</protein>
<accession>C6DKV3</accession>
<gene>
    <name evidence="1" type="primary">mdoG</name>
    <name evidence="1" type="synonym">opgG</name>
    <name type="ordered locus">PC1_2523</name>
</gene>
<name>OPGG_PECCP</name>
<evidence type="ECO:0000255" key="1">
    <source>
        <dbReference type="HAMAP-Rule" id="MF_01069"/>
    </source>
</evidence>
<proteinExistence type="inferred from homology"/>
<comment type="function">
    <text evidence="1">Involved in the biosynthesis of osmoregulated periplasmic glucans (OPGs).</text>
</comment>
<comment type="pathway">
    <text evidence="1">Glycan metabolism; osmoregulated periplasmic glucan (OPG) biosynthesis.</text>
</comment>
<comment type="subcellular location">
    <subcellularLocation>
        <location evidence="1">Periplasm</location>
    </subcellularLocation>
</comment>
<comment type="similarity">
    <text evidence="1">Belongs to the OpgD/OpgG family.</text>
</comment>
<sequence length="522" mass="58913">MLDNKFGFKQRVASLRWLSAAIMLSVSAVPAWAFSIDDVAQQAEKLSQKGFEAPKSNLPAQFRDMKFADYQQIRFNNDKSYWNNVQTPFKLQFYHQGMYFDTPVKINEVTATTVDEIKYSPEYFDFGSVNHDAEAVKNLGFAGFKVLYPINKADKNDEIVSMLGASYFRVVGKGQIYGLSARGLAIDTALPSGEEFPRFREFWIERPKPNDKHLVIYALLDSPRAAGAYRFTVYPGRDSVVDVQAKVFLRDKVGKLGIAPLTSMYLFGPNQPSPTLNYRPALNDSNGLSIHAGNGEWIWRPLNNPKHLSVSTYAVENPKGFGLLQRGRDFTAYEDLDDRYDLRPSGWVEPKGEWGKGKVELVEIPTADETNDNIVAFWTPDVLPETGKPLDIKYRLHFTRDEDQLHSPNIAYVQQTRRSAGDVKQSNLIRQPDGTIAYIVDFVGPNLKELDESTPVASQVSIGDNGEIVENNVRYNPVTHGWRLTLRLRVKDAKQPTEMRAALVNGETTLTETWSNQLPANE</sequence>
<organism>
    <name type="scientific">Pectobacterium carotovorum subsp. carotovorum (strain PC1)</name>
    <dbReference type="NCBI Taxonomy" id="561230"/>
    <lineage>
        <taxon>Bacteria</taxon>
        <taxon>Pseudomonadati</taxon>
        <taxon>Pseudomonadota</taxon>
        <taxon>Gammaproteobacteria</taxon>
        <taxon>Enterobacterales</taxon>
        <taxon>Pectobacteriaceae</taxon>
        <taxon>Pectobacterium</taxon>
    </lineage>
</organism>